<proteinExistence type="evidence at protein level"/>
<gene>
    <name type="primary">Entpd2</name>
    <name type="synonym">Cd39l1</name>
</gene>
<sequence>MAGKLVSLVPPLLLAAAGLTGLLLLCVPTQDVREPPALKYGIVLDAGSSHTSMFVYKWPADKENDTGIVGQHSSCDVQGGGISSYANDPSKAGQSLVRCLEQALRDVPRDRHASTPLYLGATAGMRPFNLTSPEATARVLEAVTQTLTQYPFDFRGARILSGQDEGVFGWVTANYLLENFIKYGWVGRWIRPRKGTLGAMDLGGASTQITFETTSPSEDPGNEVHLRLYGQHYRVYTHSFLCYGRDQILLRLLASALQIHRFHPCWPKGYSTQVLLQEVYQSPCTMGQRPRAFNGSAIVSLSGTSNATLCRDLVSRLFNISSCPFSQCSFNGVFQPPVAGNFIAFSAFYYTVDFLTTVMGLPVGTLKQLEEATEITCNQTWTELQARVPGQKTRLADYCAVAMFIHQLLSRGYHFDERSFREVVFQKKAADTAVGWALGYMLNLTNLIPADLPGLRKGTHFSSWVALLLLFTVLILAALVLLLRQVRSAKSPGAL</sequence>
<comment type="function">
    <text>In the nervous system, could hydrolyze ATP and other nucleotides to regulate purinergic neurotransmission. Hydrolyzes ADP only to a marginal extent.</text>
</comment>
<comment type="cofactor">
    <cofactor>
        <name>Ca(2+)</name>
        <dbReference type="ChEBI" id="CHEBI:29108"/>
    </cofactor>
    <cofactor>
        <name>Mg(2+)</name>
        <dbReference type="ChEBI" id="CHEBI:18420"/>
    </cofactor>
</comment>
<comment type="subcellular location">
    <molecule>Isoform 1</molecule>
    <subcellularLocation>
        <location evidence="1">Cell membrane</location>
        <topology evidence="1">Multi-pass membrane protein</topology>
    </subcellularLocation>
</comment>
<comment type="alternative products">
    <event type="alternative splicing"/>
    <isoform>
        <id>O35795-1</id>
        <name>1</name>
        <sequence type="displayed"/>
    </isoform>
    <isoform>
        <id>O35795-2</id>
        <name>2</name>
        <sequence type="described" ref="VSP_003613"/>
    </isoform>
</comment>
<comment type="tissue specificity">
    <text>Expressed in brain, heart, vas deferens, kidney, skeletal muscle, thymus, lung and spleen. Weak expression in liver.</text>
</comment>
<comment type="induction">
    <text>By FSH in Sertoli cells but not in peritubular cells; by cAMP in both type of cells.</text>
</comment>
<comment type="similarity">
    <text evidence="5">Belongs to the GDA1/CD39 NTPase family.</text>
</comment>
<feature type="chain" id="PRO_0000209908" description="Ectonucleoside triphosphate diphosphohydrolase 2">
    <location>
        <begin position="1"/>
        <end position="495"/>
    </location>
</feature>
<feature type="topological domain" description="Cytoplasmic" evidence="2">
    <location>
        <begin position="1"/>
        <end position="4"/>
    </location>
</feature>
<feature type="transmembrane region" description="Helical" evidence="2">
    <location>
        <begin position="5"/>
        <end position="25"/>
    </location>
</feature>
<feature type="topological domain" description="Extracellular" evidence="2">
    <location>
        <begin position="26"/>
        <end position="462"/>
    </location>
</feature>
<feature type="transmembrane region" description="Helical" evidence="2">
    <location>
        <begin position="463"/>
        <end position="483"/>
    </location>
</feature>
<feature type="topological domain" description="Cytoplasmic" evidence="2">
    <location>
        <begin position="484"/>
        <end position="495"/>
    </location>
</feature>
<feature type="active site" description="Proton acceptor" evidence="3">
    <location>
        <position position="165"/>
    </location>
</feature>
<feature type="binding site" evidence="3">
    <location>
        <begin position="204"/>
        <end position="208"/>
    </location>
    <ligand>
        <name>ATP</name>
        <dbReference type="ChEBI" id="CHEBI:30616"/>
    </ligand>
</feature>
<feature type="glycosylation site" description="N-linked (GlcNAc...) asparagine" evidence="6">
    <location>
        <position position="64"/>
    </location>
</feature>
<feature type="glycosylation site" description="N-linked (GlcNAc...) asparagine" evidence="2">
    <location>
        <position position="129"/>
    </location>
</feature>
<feature type="glycosylation site" description="N-linked (GlcNAc...) asparagine" evidence="2">
    <location>
        <position position="294"/>
    </location>
</feature>
<feature type="glycosylation site" description="N-linked (GlcNAc...) asparagine" evidence="2">
    <location>
        <position position="306"/>
    </location>
</feature>
<feature type="glycosylation site" description="N-linked (GlcNAc...) asparagine" evidence="2">
    <location>
        <position position="319"/>
    </location>
</feature>
<feature type="glycosylation site" description="N-linked (GlcNAc...) asparagine" evidence="2">
    <location>
        <position position="378"/>
    </location>
</feature>
<feature type="glycosylation site" description="N-linked (GlcNAc...) asparagine" evidence="2">
    <location>
        <position position="443"/>
    </location>
</feature>
<feature type="disulfide bond" evidence="3">
    <location>
        <begin position="75"/>
        <end position="99"/>
    </location>
</feature>
<feature type="disulfide bond" evidence="3">
    <location>
        <begin position="242"/>
        <end position="284"/>
    </location>
</feature>
<feature type="disulfide bond" evidence="3">
    <location>
        <begin position="265"/>
        <end position="310"/>
    </location>
</feature>
<feature type="disulfide bond" evidence="3">
    <location>
        <begin position="323"/>
        <end position="328"/>
    </location>
</feature>
<feature type="disulfide bond" evidence="3">
    <location>
        <begin position="377"/>
        <end position="399"/>
    </location>
</feature>
<feature type="splice variant" id="VSP_003613" description="In isoform 2." evidence="4">
    <original>VRSAKSPGAL</original>
    <variation>DVRSQPVTQGEVHSEWDFCSDLQGPGNFLSGPLERQAPEPTGWESVPCLLVKTFVIKDFS</variation>
    <location>
        <begin position="486"/>
        <end position="495"/>
    </location>
</feature>
<feature type="sequence conflict" description="In Ref. 2; AAF87740." evidence="5" ref="2">
    <original>T</original>
    <variation>A</variation>
    <location>
        <position position="20"/>
    </location>
</feature>
<feature type="sequence conflict" description="In Ref. 2; AAF87740." evidence="5" ref="2">
    <original>PF</original>
    <variation>LL</variation>
    <location>
        <begin position="127"/>
        <end position="128"/>
    </location>
</feature>
<feature type="sequence conflict" description="In Ref. 2; AAF87740." evidence="5" ref="2">
    <original>A</original>
    <variation>T</variation>
    <location>
        <position position="339"/>
    </location>
</feature>
<feature type="sequence conflict" description="In Ref. 2; AAF87740." evidence="5" ref="2">
    <original>L</original>
    <variation>F</variation>
    <location>
        <position position="444"/>
    </location>
</feature>
<feature type="strand" evidence="7">
    <location>
        <begin position="38"/>
        <end position="46"/>
    </location>
</feature>
<feature type="strand" evidence="7">
    <location>
        <begin position="51"/>
        <end position="59"/>
    </location>
</feature>
<feature type="helix" evidence="8">
    <location>
        <begin position="60"/>
        <end position="62"/>
    </location>
</feature>
<feature type="strand" evidence="7">
    <location>
        <begin position="70"/>
        <end position="76"/>
    </location>
</feature>
<feature type="strand" evidence="7">
    <location>
        <begin position="78"/>
        <end position="80"/>
    </location>
</feature>
<feature type="helix" evidence="7">
    <location>
        <begin position="82"/>
        <end position="85"/>
    </location>
</feature>
<feature type="helix" evidence="7">
    <location>
        <begin position="90"/>
        <end position="95"/>
    </location>
</feature>
<feature type="helix" evidence="7">
    <location>
        <begin position="97"/>
        <end position="106"/>
    </location>
</feature>
<feature type="helix" evidence="7">
    <location>
        <begin position="109"/>
        <end position="114"/>
    </location>
</feature>
<feature type="strand" evidence="7">
    <location>
        <begin position="116"/>
        <end position="121"/>
    </location>
</feature>
<feature type="helix" evidence="7">
    <location>
        <begin position="123"/>
        <end position="131"/>
    </location>
</feature>
<feature type="helix" evidence="7">
    <location>
        <begin position="133"/>
        <end position="147"/>
    </location>
</feature>
<feature type="strand" evidence="7">
    <location>
        <begin position="150"/>
        <end position="159"/>
    </location>
</feature>
<feature type="helix" evidence="7">
    <location>
        <begin position="162"/>
        <end position="176"/>
    </location>
</feature>
<feature type="turn" evidence="7">
    <location>
        <begin position="177"/>
        <end position="180"/>
    </location>
</feature>
<feature type="strand" evidence="7">
    <location>
        <begin position="198"/>
        <end position="202"/>
    </location>
</feature>
<feature type="strand" evidence="7">
    <location>
        <begin position="204"/>
        <end position="212"/>
    </location>
</feature>
<feature type="helix" evidence="7">
    <location>
        <begin position="220"/>
        <end position="222"/>
    </location>
</feature>
<feature type="strand" evidence="7">
    <location>
        <begin position="223"/>
        <end position="228"/>
    </location>
</feature>
<feature type="strand" evidence="7">
    <location>
        <begin position="231"/>
        <end position="241"/>
    </location>
</feature>
<feature type="helix" evidence="7">
    <location>
        <begin position="245"/>
        <end position="259"/>
    </location>
</feature>
<feature type="strand" evidence="7">
    <location>
        <begin position="261"/>
        <end position="263"/>
    </location>
</feature>
<feature type="strand" evidence="7">
    <location>
        <begin position="271"/>
        <end position="275"/>
    </location>
</feature>
<feature type="helix" evidence="7">
    <location>
        <begin position="276"/>
        <end position="280"/>
    </location>
</feature>
<feature type="turn" evidence="7">
    <location>
        <begin position="283"/>
        <end position="287"/>
    </location>
</feature>
<feature type="strand" evidence="7">
    <location>
        <begin position="298"/>
        <end position="303"/>
    </location>
</feature>
<feature type="helix" evidence="7">
    <location>
        <begin position="307"/>
        <end position="315"/>
    </location>
</feature>
<feature type="strand" evidence="7">
    <location>
        <begin position="324"/>
        <end position="330"/>
    </location>
</feature>
<feature type="strand" evidence="7">
    <location>
        <begin position="342"/>
        <end position="346"/>
    </location>
</feature>
<feature type="helix" evidence="7">
    <location>
        <begin position="347"/>
        <end position="357"/>
    </location>
</feature>
<feature type="helix" evidence="7">
    <location>
        <begin position="366"/>
        <end position="378"/>
    </location>
</feature>
<feature type="helix" evidence="7">
    <location>
        <begin position="381"/>
        <end position="385"/>
    </location>
</feature>
<feature type="helix" evidence="7">
    <location>
        <begin position="395"/>
        <end position="397"/>
    </location>
</feature>
<feature type="helix" evidence="7">
    <location>
        <begin position="398"/>
        <end position="410"/>
    </location>
</feature>
<feature type="turn" evidence="9">
    <location>
        <begin position="411"/>
        <end position="413"/>
    </location>
</feature>
<feature type="helix" evidence="7">
    <location>
        <begin position="417"/>
        <end position="420"/>
    </location>
</feature>
<feature type="strand" evidence="7">
    <location>
        <begin position="423"/>
        <end position="425"/>
    </location>
</feature>
<feature type="strand" evidence="7">
    <location>
        <begin position="427"/>
        <end position="429"/>
    </location>
</feature>
<feature type="helix" evidence="7">
    <location>
        <begin position="437"/>
        <end position="444"/>
    </location>
</feature>
<feature type="helix" evidence="7">
    <location>
        <begin position="453"/>
        <end position="458"/>
    </location>
</feature>
<protein>
    <recommendedName>
        <fullName>Ectonucleoside triphosphate diphosphohydrolase 2</fullName>
        <shortName>NTPDase 2</shortName>
        <ecNumber>3.6.1.-</ecNumber>
    </recommendedName>
    <alternativeName>
        <fullName>CD39 antigen-like 1</fullName>
    </alternativeName>
    <alternativeName>
        <fullName>Ecto-ATP diphosphohydrolase 2</fullName>
        <shortName>Ecto-ATPDase 2</shortName>
        <shortName>Ecto-ATPase 2</shortName>
    </alternativeName>
</protein>
<keyword id="KW-0002">3D-structure</keyword>
<keyword id="KW-0025">Alternative splicing</keyword>
<keyword id="KW-0067">ATP-binding</keyword>
<keyword id="KW-0106">Calcium</keyword>
<keyword id="KW-1003">Cell membrane</keyword>
<keyword id="KW-1015">Disulfide bond</keyword>
<keyword id="KW-0325">Glycoprotein</keyword>
<keyword id="KW-0378">Hydrolase</keyword>
<keyword id="KW-0460">Magnesium</keyword>
<keyword id="KW-0472">Membrane</keyword>
<keyword id="KW-0547">Nucleotide-binding</keyword>
<keyword id="KW-1185">Reference proteome</keyword>
<keyword id="KW-0812">Transmembrane</keyword>
<keyword id="KW-1133">Transmembrane helix</keyword>
<reference key="1">
    <citation type="journal article" date="1997" name="Neuropharmacology">
        <title>An ecto-ATPase and an ecto-ATP diphosphohydrolase are expressed in rat brain.</title>
        <authorList>
            <person name="Kegel B."/>
            <person name="Braun N."/>
            <person name="Heine P."/>
            <person name="Maliszewski C.R."/>
            <person name="Zimmermann H."/>
        </authorList>
    </citation>
    <scope>NUCLEOTIDE SEQUENCE [MRNA] (ISOFORM 1)</scope>
    <scope>CHARACTERIZATION</scope>
    <source>
        <strain>Sprague-Dawley</strain>
        <tissue>Brain</tissue>
    </source>
</reference>
<reference key="2">
    <citation type="journal article" date="2001" name="J. Androl.">
        <title>Ecto-ATPase mRNA is regulated by FSH in Sertoli cells.</title>
        <authorList>
            <person name="Lu Q."/>
            <person name="Porter L.D."/>
            <person name="Cui X."/>
            <person name="Sanborn B.M."/>
        </authorList>
    </citation>
    <scope>NUCLEOTIDE SEQUENCE [MRNA] (ISOFORM 1)</scope>
    <source>
        <strain>Sprague-Dawley</strain>
        <tissue>Sertoli cell</tissue>
    </source>
</reference>
<reference key="3">
    <citation type="journal article" date="1999" name="Brain Res. Mol. Brain Res.">
        <title>Evidence for alternative splicing of ecto-ATPase associated with termination of purinergic transmission.</title>
        <authorList>
            <person name="Vlajkovic S.M."/>
            <person name="Housley G.D."/>
            <person name="Greenwood D."/>
            <person name="Thorne P.R."/>
        </authorList>
    </citation>
    <scope>NUCLEOTIDE SEQUENCE [MRNA] OF 379-495 (ISOFORM 2)</scope>
    <source>
        <strain>Wistar</strain>
        <tissue>Cochlea</tissue>
    </source>
</reference>
<reference key="4">
    <citation type="journal article" date="2013" name="J. Proteome Res.">
        <title>Site-specific glycan-peptide analysis for determination of N-glycoproteome heterogeneity.</title>
        <authorList>
            <person name="Parker B.L."/>
            <person name="Thaysen-Andersen M."/>
            <person name="Solis N."/>
            <person name="Scott N.E."/>
            <person name="Larsen M.R."/>
            <person name="Graham M.E."/>
            <person name="Packer N.H."/>
            <person name="Cordwell S.J."/>
        </authorList>
    </citation>
    <scope>GLYCOSYLATION [LARGE SCALE ANALYSIS] AT ASN-64</scope>
    <scope>IDENTIFICATION BY MASS SPECTROMETRY [LARGE SCALE ANALYSIS]</scope>
    <source>
        <tissue>Brain</tissue>
    </source>
</reference>
<reference key="5">
    <citation type="journal article" date="2008" name="Proc. Natl. Acad. Sci. U.S.A.">
        <title>Structural insight into signal conversion and inactivation by NTPDase2 in purinergic signaling.</title>
        <authorList>
            <person name="Zebisch M."/>
            <person name="Strater N."/>
        </authorList>
    </citation>
    <scope>X-RAY CRYSTALLOGRAPHY (1.7 ANGSTROMS) OF 28-461 ALONE AND IN COMPLEX WITH ATP ANALOGS AND CALCIUM</scope>
    <scope>ACTIVE SITE</scope>
    <scope>DISULFIDE BONDS</scope>
</reference>
<organism>
    <name type="scientific">Rattus norvegicus</name>
    <name type="common">Rat</name>
    <dbReference type="NCBI Taxonomy" id="10116"/>
    <lineage>
        <taxon>Eukaryota</taxon>
        <taxon>Metazoa</taxon>
        <taxon>Chordata</taxon>
        <taxon>Craniata</taxon>
        <taxon>Vertebrata</taxon>
        <taxon>Euteleostomi</taxon>
        <taxon>Mammalia</taxon>
        <taxon>Eutheria</taxon>
        <taxon>Euarchontoglires</taxon>
        <taxon>Glires</taxon>
        <taxon>Rodentia</taxon>
        <taxon>Myomorpha</taxon>
        <taxon>Muroidea</taxon>
        <taxon>Muridae</taxon>
        <taxon>Murinae</taxon>
        <taxon>Rattus</taxon>
    </lineage>
</organism>
<name>ENTP2_RAT</name>
<dbReference type="EC" id="3.6.1.-"/>
<dbReference type="EMBL" id="Y11835">
    <property type="protein sequence ID" value="CAA72533.1"/>
    <property type="molecule type" value="mRNA"/>
</dbReference>
<dbReference type="EMBL" id="AF276940">
    <property type="protein sequence ID" value="AAF87740.1"/>
    <property type="molecule type" value="mRNA"/>
</dbReference>
<dbReference type="EMBL" id="AF129103">
    <property type="protein sequence ID" value="AAD42303.1"/>
    <property type="molecule type" value="mRNA"/>
</dbReference>
<dbReference type="RefSeq" id="NP_742027.1">
    <property type="nucleotide sequence ID" value="NM_172030.1"/>
</dbReference>
<dbReference type="PDB" id="3CJ1">
    <property type="method" value="X-ray"/>
    <property type="resolution" value="1.70 A"/>
    <property type="chains" value="A=29-461"/>
</dbReference>
<dbReference type="PDB" id="3CJ7">
    <property type="method" value="X-ray"/>
    <property type="resolution" value="1.80 A"/>
    <property type="chains" value="A=29-461"/>
</dbReference>
<dbReference type="PDB" id="3CJ9">
    <property type="method" value="X-ray"/>
    <property type="resolution" value="1.80 A"/>
    <property type="chains" value="A=29-461"/>
</dbReference>
<dbReference type="PDB" id="3CJA">
    <property type="method" value="X-ray"/>
    <property type="resolution" value="2.10 A"/>
    <property type="chains" value="A=29-461"/>
</dbReference>
<dbReference type="PDB" id="4BQZ">
    <property type="method" value="X-ray"/>
    <property type="resolution" value="2.05 A"/>
    <property type="chains" value="A=28-462"/>
</dbReference>
<dbReference type="PDB" id="4BR0">
    <property type="method" value="X-ray"/>
    <property type="resolution" value="2.05 A"/>
    <property type="chains" value="A=28-462"/>
</dbReference>
<dbReference type="PDB" id="4BR2">
    <property type="method" value="X-ray"/>
    <property type="resolution" value="2.00 A"/>
    <property type="chains" value="A=28-462"/>
</dbReference>
<dbReference type="PDB" id="4BR5">
    <property type="method" value="X-ray"/>
    <property type="resolution" value="1.75 A"/>
    <property type="chains" value="A=28-462"/>
</dbReference>
<dbReference type="PDB" id="4CD1">
    <property type="method" value="X-ray"/>
    <property type="resolution" value="2.00 A"/>
    <property type="chains" value="A=28-462"/>
</dbReference>
<dbReference type="PDB" id="4CD3">
    <property type="method" value="X-ray"/>
    <property type="resolution" value="2.19 A"/>
    <property type="chains" value="A=28-461"/>
</dbReference>
<dbReference type="PDBsum" id="3CJ1"/>
<dbReference type="PDBsum" id="3CJ7"/>
<dbReference type="PDBsum" id="3CJ9"/>
<dbReference type="PDBsum" id="3CJA"/>
<dbReference type="PDBsum" id="4BQZ"/>
<dbReference type="PDBsum" id="4BR0"/>
<dbReference type="PDBsum" id="4BR2"/>
<dbReference type="PDBsum" id="4BR5"/>
<dbReference type="PDBsum" id="4CD1"/>
<dbReference type="PDBsum" id="4CD3"/>
<dbReference type="SMR" id="O35795"/>
<dbReference type="CORUM" id="O35795"/>
<dbReference type="FunCoup" id="O35795">
    <property type="interactions" value="331"/>
</dbReference>
<dbReference type="STRING" id="10116.ENSRNOP00000017829"/>
<dbReference type="BindingDB" id="O35795"/>
<dbReference type="ChEMBL" id="CHEMBL3300"/>
<dbReference type="DrugCentral" id="O35795"/>
<dbReference type="GlyCosmos" id="O35795">
    <property type="glycosylation" value="7 sites, 2 glycans"/>
</dbReference>
<dbReference type="GlyGen" id="O35795">
    <property type="glycosylation" value="7 sites, 2 N-linked glycans (1 site)"/>
</dbReference>
<dbReference type="iPTMnet" id="O35795"/>
<dbReference type="PhosphoSitePlus" id="O35795"/>
<dbReference type="SwissPalm" id="O35795"/>
<dbReference type="PaxDb" id="10116-ENSRNOP00000017829"/>
<dbReference type="GeneID" id="64467"/>
<dbReference type="KEGG" id="rno:64467"/>
<dbReference type="UCSC" id="RGD:69266">
    <molecule id="O35795-1"/>
    <property type="organism name" value="rat"/>
</dbReference>
<dbReference type="AGR" id="RGD:69266"/>
<dbReference type="CTD" id="954"/>
<dbReference type="RGD" id="69266">
    <property type="gene designation" value="Entpd2"/>
</dbReference>
<dbReference type="eggNOG" id="KOG1386">
    <property type="taxonomic scope" value="Eukaryota"/>
</dbReference>
<dbReference type="InParanoid" id="O35795"/>
<dbReference type="OrthoDB" id="6372431at2759"/>
<dbReference type="PhylomeDB" id="O35795"/>
<dbReference type="BRENDA" id="3.6.1.5">
    <property type="organism ID" value="5301"/>
</dbReference>
<dbReference type="Reactome" id="R-RNO-8850843">
    <property type="pathway name" value="Phosphate bond hydrolysis by NTPDase proteins"/>
</dbReference>
<dbReference type="EvolutionaryTrace" id="O35795"/>
<dbReference type="PRO" id="PR:O35795"/>
<dbReference type="Proteomes" id="UP000002494">
    <property type="component" value="Unplaced"/>
</dbReference>
<dbReference type="GO" id="GO:0005604">
    <property type="term" value="C:basement membrane"/>
    <property type="evidence" value="ECO:0000266"/>
    <property type="project" value="RGD"/>
</dbReference>
<dbReference type="GO" id="GO:0044297">
    <property type="term" value="C:cell body"/>
    <property type="evidence" value="ECO:0000314"/>
    <property type="project" value="RGD"/>
</dbReference>
<dbReference type="GO" id="GO:0031253">
    <property type="term" value="C:cell projection membrane"/>
    <property type="evidence" value="ECO:0000314"/>
    <property type="project" value="RGD"/>
</dbReference>
<dbReference type="GO" id="GO:0009986">
    <property type="term" value="C:cell surface"/>
    <property type="evidence" value="ECO:0000314"/>
    <property type="project" value="RGD"/>
</dbReference>
<dbReference type="GO" id="GO:0005886">
    <property type="term" value="C:plasma membrane"/>
    <property type="evidence" value="ECO:0000266"/>
    <property type="project" value="RGD"/>
</dbReference>
<dbReference type="GO" id="GO:0043262">
    <property type="term" value="F:ADP phosphatase activity"/>
    <property type="evidence" value="ECO:0000314"/>
    <property type="project" value="RGD"/>
</dbReference>
<dbReference type="GO" id="GO:0005524">
    <property type="term" value="F:ATP binding"/>
    <property type="evidence" value="ECO:0007669"/>
    <property type="project" value="UniProtKB-KW"/>
</dbReference>
<dbReference type="GO" id="GO:0016887">
    <property type="term" value="F:ATP hydrolysis activity"/>
    <property type="evidence" value="ECO:0000314"/>
    <property type="project" value="RGD"/>
</dbReference>
<dbReference type="GO" id="GO:0004382">
    <property type="term" value="F:GDP phosphatase activity"/>
    <property type="evidence" value="ECO:0000318"/>
    <property type="project" value="GO_Central"/>
</dbReference>
<dbReference type="GO" id="GO:0042802">
    <property type="term" value="F:identical protein binding"/>
    <property type="evidence" value="ECO:0000353"/>
    <property type="project" value="RGD"/>
</dbReference>
<dbReference type="GO" id="GO:0017110">
    <property type="term" value="F:nucleoside diphosphate phosphatase activity"/>
    <property type="evidence" value="ECO:0000266"/>
    <property type="project" value="RGD"/>
</dbReference>
<dbReference type="GO" id="GO:0017111">
    <property type="term" value="F:ribonucleoside triphosphate phosphatase activity"/>
    <property type="evidence" value="ECO:0000266"/>
    <property type="project" value="RGD"/>
</dbReference>
<dbReference type="GO" id="GO:0045134">
    <property type="term" value="F:UDP phosphatase activity"/>
    <property type="evidence" value="ECO:0000318"/>
    <property type="project" value="GO_Central"/>
</dbReference>
<dbReference type="GO" id="GO:0035457">
    <property type="term" value="P:cellular response to interferon-alpha"/>
    <property type="evidence" value="ECO:0000270"/>
    <property type="project" value="RGD"/>
</dbReference>
<dbReference type="GO" id="GO:0071354">
    <property type="term" value="P:cellular response to interleukin-6"/>
    <property type="evidence" value="ECO:0000315"/>
    <property type="project" value="RGD"/>
</dbReference>
<dbReference type="GO" id="GO:0071222">
    <property type="term" value="P:cellular response to lipopolysaccharide"/>
    <property type="evidence" value="ECO:0000270"/>
    <property type="project" value="RGD"/>
</dbReference>
<dbReference type="GO" id="GO:0071356">
    <property type="term" value="P:cellular response to tumor necrosis factor"/>
    <property type="evidence" value="ECO:0000270"/>
    <property type="project" value="RGD"/>
</dbReference>
<dbReference type="GO" id="GO:0007186">
    <property type="term" value="P:G protein-coupled receptor signaling pathway"/>
    <property type="evidence" value="ECO:0000266"/>
    <property type="project" value="RGD"/>
</dbReference>
<dbReference type="GO" id="GO:0009134">
    <property type="term" value="P:nucleoside diphosphate catabolic process"/>
    <property type="evidence" value="ECO:0000318"/>
    <property type="project" value="GO_Central"/>
</dbReference>
<dbReference type="GO" id="GO:0030168">
    <property type="term" value="P:platelet activation"/>
    <property type="evidence" value="ECO:0000266"/>
    <property type="project" value="RGD"/>
</dbReference>
<dbReference type="GO" id="GO:0009181">
    <property type="term" value="P:purine ribonucleoside diphosphate catabolic process"/>
    <property type="evidence" value="ECO:0000266"/>
    <property type="project" value="RGD"/>
</dbReference>
<dbReference type="GO" id="GO:0010996">
    <property type="term" value="P:response to auditory stimulus"/>
    <property type="evidence" value="ECO:0000270"/>
    <property type="project" value="RGD"/>
</dbReference>
<dbReference type="CDD" id="cd24111">
    <property type="entry name" value="ASKHA_NBD_NTPDase2"/>
    <property type="match status" value="1"/>
</dbReference>
<dbReference type="FunFam" id="3.30.420.150:FF:000002">
    <property type="entry name" value="Ectonucleoside triphosphate diphosphohydrolase 1"/>
    <property type="match status" value="1"/>
</dbReference>
<dbReference type="FunFam" id="3.30.420.40:FF:000068">
    <property type="entry name" value="Ectonucleoside triphosphate diphosphohydrolase 1"/>
    <property type="match status" value="1"/>
</dbReference>
<dbReference type="Gene3D" id="3.30.420.40">
    <property type="match status" value="1"/>
</dbReference>
<dbReference type="Gene3D" id="3.30.420.150">
    <property type="entry name" value="Exopolyphosphatase. Domain 2"/>
    <property type="match status" value="1"/>
</dbReference>
<dbReference type="InterPro" id="IPR000407">
    <property type="entry name" value="GDA1_CD39_NTPase"/>
</dbReference>
<dbReference type="PANTHER" id="PTHR11782">
    <property type="entry name" value="ADENOSINE/GUANOSINE DIPHOSPHATASE"/>
    <property type="match status" value="1"/>
</dbReference>
<dbReference type="PANTHER" id="PTHR11782:SF33">
    <property type="entry name" value="ECTONUCLEOSIDE TRIPHOSPHATE DIPHOSPHOHYDROLASE 2"/>
    <property type="match status" value="1"/>
</dbReference>
<dbReference type="Pfam" id="PF01150">
    <property type="entry name" value="GDA1_CD39"/>
    <property type="match status" value="1"/>
</dbReference>
<dbReference type="PROSITE" id="PS01238">
    <property type="entry name" value="GDA1_CD39_NTPASE"/>
    <property type="match status" value="1"/>
</dbReference>
<accession>O35795</accession>
<accession>Q9JHY5</accession>
<accession>Q9WVE7</accession>
<evidence type="ECO:0000250" key="1"/>
<evidence type="ECO:0000255" key="2"/>
<evidence type="ECO:0000269" key="3">
    <source>
    </source>
</evidence>
<evidence type="ECO:0000303" key="4">
    <source>
    </source>
</evidence>
<evidence type="ECO:0000305" key="5"/>
<evidence type="ECO:0007744" key="6">
    <source>
    </source>
</evidence>
<evidence type="ECO:0007829" key="7">
    <source>
        <dbReference type="PDB" id="3CJ1"/>
    </source>
</evidence>
<evidence type="ECO:0007829" key="8">
    <source>
        <dbReference type="PDB" id="3CJ7"/>
    </source>
</evidence>
<evidence type="ECO:0007829" key="9">
    <source>
        <dbReference type="PDB" id="4CD1"/>
    </source>
</evidence>